<feature type="chain" id="PRO_0000107200" description="Putative toxin RelE4">
    <location>
        <begin position="1"/>
        <end position="94"/>
    </location>
</feature>
<protein>
    <recommendedName>
        <fullName>Putative toxin RelE4</fullName>
    </recommendedName>
</protein>
<accession>Q58573</accession>
<gene>
    <name type="primary">relE4</name>
    <name type="ordered locus">MJ1173</name>
</gene>
<proteinExistence type="inferred from homology"/>
<comment type="function">
    <text evidence="1">Toxic component of a type II toxin-antitoxin (TA) system. Its cognate antitoxin is RelB4 (Potential).</text>
</comment>
<comment type="similarity">
    <text evidence="1">Belongs to the RelE toxin family.</text>
</comment>
<dbReference type="EMBL" id="L77117">
    <property type="protein sequence ID" value="AAB99176.1"/>
    <property type="molecule type" value="Genomic_DNA"/>
</dbReference>
<dbReference type="PIR" id="D64446">
    <property type="entry name" value="D64446"/>
</dbReference>
<dbReference type="RefSeq" id="WP_010870686.1">
    <property type="nucleotide sequence ID" value="NC_000909.1"/>
</dbReference>
<dbReference type="SMR" id="Q58573"/>
<dbReference type="STRING" id="243232.MJ_1173"/>
<dbReference type="PaxDb" id="243232-MJ_1173"/>
<dbReference type="EnsemblBacteria" id="AAB99176">
    <property type="protein sequence ID" value="AAB99176"/>
    <property type="gene ID" value="MJ_1173"/>
</dbReference>
<dbReference type="GeneID" id="1452071"/>
<dbReference type="KEGG" id="mja:MJ_1173"/>
<dbReference type="eggNOG" id="arCOG02414">
    <property type="taxonomic scope" value="Archaea"/>
</dbReference>
<dbReference type="HOGENOM" id="CLU_155761_4_0_2"/>
<dbReference type="InParanoid" id="Q58573"/>
<dbReference type="OrthoDB" id="65163at2157"/>
<dbReference type="PhylomeDB" id="Q58573"/>
<dbReference type="Proteomes" id="UP000000805">
    <property type="component" value="Chromosome"/>
</dbReference>
<dbReference type="Gene3D" id="3.30.2310.20">
    <property type="entry name" value="RelE-like"/>
    <property type="match status" value="1"/>
</dbReference>
<dbReference type="InterPro" id="IPR007712">
    <property type="entry name" value="RelE/ParE_toxin"/>
</dbReference>
<dbReference type="InterPro" id="IPR035093">
    <property type="entry name" value="RelE/ParE_toxin_dom_sf"/>
</dbReference>
<dbReference type="InterPro" id="IPR004386">
    <property type="entry name" value="Toxin_YafQ-like"/>
</dbReference>
<dbReference type="NCBIfam" id="TIGR02385">
    <property type="entry name" value="RelE_StbE"/>
    <property type="match status" value="1"/>
</dbReference>
<dbReference type="NCBIfam" id="TIGR00053">
    <property type="entry name" value="YafQ family addiction module toxin"/>
    <property type="match status" value="1"/>
</dbReference>
<dbReference type="Pfam" id="PF05016">
    <property type="entry name" value="ParE_toxin"/>
    <property type="match status" value="1"/>
</dbReference>
<dbReference type="SUPFAM" id="SSF143011">
    <property type="entry name" value="RelE-like"/>
    <property type="match status" value="1"/>
</dbReference>
<organism>
    <name type="scientific">Methanocaldococcus jannaschii (strain ATCC 43067 / DSM 2661 / JAL-1 / JCM 10045 / NBRC 100440)</name>
    <name type="common">Methanococcus jannaschii</name>
    <dbReference type="NCBI Taxonomy" id="243232"/>
    <lineage>
        <taxon>Archaea</taxon>
        <taxon>Methanobacteriati</taxon>
        <taxon>Methanobacteriota</taxon>
        <taxon>Methanomada group</taxon>
        <taxon>Methanococci</taxon>
        <taxon>Methanococcales</taxon>
        <taxon>Methanocaldococcaceae</taxon>
        <taxon>Methanocaldococcus</taxon>
    </lineage>
</organism>
<evidence type="ECO:0000305" key="1"/>
<sequence length="94" mass="11450">MYEIEIMPSLDKILQKLSKRDKKKLKAILKKMEEITQNPHHYKNLRHPLNDFKRVHIDKSFVLVFTVDENNKTVIFVDFDHHDNIYKKKKLFKD</sequence>
<keyword id="KW-1185">Reference proteome</keyword>
<keyword id="KW-1277">Toxin-antitoxin system</keyword>
<reference key="1">
    <citation type="journal article" date="1996" name="Science">
        <title>Complete genome sequence of the methanogenic archaeon, Methanococcus jannaschii.</title>
        <authorList>
            <person name="Bult C.J."/>
            <person name="White O."/>
            <person name="Olsen G.J."/>
            <person name="Zhou L."/>
            <person name="Fleischmann R.D."/>
            <person name="Sutton G.G."/>
            <person name="Blake J.A."/>
            <person name="FitzGerald L.M."/>
            <person name="Clayton R.A."/>
            <person name="Gocayne J.D."/>
            <person name="Kerlavage A.R."/>
            <person name="Dougherty B.A."/>
            <person name="Tomb J.-F."/>
            <person name="Adams M.D."/>
            <person name="Reich C.I."/>
            <person name="Overbeek R."/>
            <person name="Kirkness E.F."/>
            <person name="Weinstock K.G."/>
            <person name="Merrick J.M."/>
            <person name="Glodek A."/>
            <person name="Scott J.L."/>
            <person name="Geoghagen N.S.M."/>
            <person name="Weidman J.F."/>
            <person name="Fuhrmann J.L."/>
            <person name="Nguyen D."/>
            <person name="Utterback T.R."/>
            <person name="Kelley J.M."/>
            <person name="Peterson J.D."/>
            <person name="Sadow P.W."/>
            <person name="Hanna M.C."/>
            <person name="Cotton M.D."/>
            <person name="Roberts K.M."/>
            <person name="Hurst M.A."/>
            <person name="Kaine B.P."/>
            <person name="Borodovsky M."/>
            <person name="Klenk H.-P."/>
            <person name="Fraser C.M."/>
            <person name="Smith H.O."/>
            <person name="Woese C.R."/>
            <person name="Venter J.C."/>
        </authorList>
    </citation>
    <scope>NUCLEOTIDE SEQUENCE [LARGE SCALE GENOMIC DNA]</scope>
    <source>
        <strain>ATCC 43067 / DSM 2661 / JAL-1 / JCM 10045 / NBRC 100440</strain>
    </source>
</reference>
<reference key="2">
    <citation type="journal article" date="2005" name="Nucleic Acids Res.">
        <title>Toxin-antitoxin loci are highly abundant in free-living but lost from host-associated prokaryotes.</title>
        <authorList>
            <person name="Pandey D.P."/>
            <person name="Gerdes K."/>
        </authorList>
    </citation>
    <scope>POSSIBLE FUNCTION</scope>
    <source>
        <strain>ATCC 43067 / DSM 2661 / JAL-1 / JCM 10045 / NBRC 100440</strain>
    </source>
</reference>
<name>RELE4_METJA</name>